<comment type="function">
    <text>Hydrolysis of 6-phosphogluconolactone to 6-phosphogluconate.</text>
</comment>
<comment type="catalytic activity">
    <reaction>
        <text>6-phospho-D-glucono-1,5-lactone + H2O = 6-phospho-D-gluconate + H(+)</text>
        <dbReference type="Rhea" id="RHEA:12556"/>
        <dbReference type="ChEBI" id="CHEBI:15377"/>
        <dbReference type="ChEBI" id="CHEBI:15378"/>
        <dbReference type="ChEBI" id="CHEBI:57955"/>
        <dbReference type="ChEBI" id="CHEBI:58759"/>
        <dbReference type="EC" id="3.1.1.31"/>
    </reaction>
</comment>
<comment type="pathway">
    <text>Carbohydrate degradation; pentose phosphate pathway; D-ribulose 5-phosphate from D-glucose 6-phosphate (oxidative stage): step 2/3.</text>
</comment>
<comment type="similarity">
    <text evidence="1">Belongs to the glucosamine/galactosamine-6-phosphate isomerase family. 6-phosphogluconolactonase subfamily.</text>
</comment>
<reference key="1">
    <citation type="journal article" date="1997" name="Nature">
        <title>The complete genome sequence of the gastric pathogen Helicobacter pylori.</title>
        <authorList>
            <person name="Tomb J.-F."/>
            <person name="White O."/>
            <person name="Kerlavage A.R."/>
            <person name="Clayton R.A."/>
            <person name="Sutton G.G."/>
            <person name="Fleischmann R.D."/>
            <person name="Ketchum K.A."/>
            <person name="Klenk H.-P."/>
            <person name="Gill S.R."/>
            <person name="Dougherty B.A."/>
            <person name="Nelson K.E."/>
            <person name="Quackenbush J."/>
            <person name="Zhou L."/>
            <person name="Kirkness E.F."/>
            <person name="Peterson S.N."/>
            <person name="Loftus B.J."/>
            <person name="Richardson D.L."/>
            <person name="Dodson R.J."/>
            <person name="Khalak H.G."/>
            <person name="Glodek A."/>
            <person name="McKenney K."/>
            <person name="FitzGerald L.M."/>
            <person name="Lee N."/>
            <person name="Adams M.D."/>
            <person name="Hickey E.K."/>
            <person name="Berg D.E."/>
            <person name="Gocayne J.D."/>
            <person name="Utterback T.R."/>
            <person name="Peterson J.D."/>
            <person name="Kelley J.M."/>
            <person name="Cotton M.D."/>
            <person name="Weidman J.F."/>
            <person name="Fujii C."/>
            <person name="Bowman C."/>
            <person name="Watthey L."/>
            <person name="Wallin E."/>
            <person name="Hayes W.S."/>
            <person name="Borodovsky M."/>
            <person name="Karp P.D."/>
            <person name="Smith H.O."/>
            <person name="Fraser C.M."/>
            <person name="Venter J.C."/>
        </authorList>
    </citation>
    <scope>NUCLEOTIDE SEQUENCE [LARGE SCALE GENOMIC DNA]</scope>
    <source>
        <strain>ATCC 700392 / 26695</strain>
    </source>
</reference>
<name>6PGL_HELPY</name>
<protein>
    <recommendedName>
        <fullName>6-phosphogluconolactonase</fullName>
        <shortName>6PGL</shortName>
        <ecNumber>3.1.1.31</ecNumber>
    </recommendedName>
</protein>
<keyword id="KW-0378">Hydrolase</keyword>
<keyword id="KW-1185">Reference proteome</keyword>
<gene>
    <name type="primary">pgl</name>
    <name type="synonym">devB</name>
    <name type="ordered locus">HP_1102</name>
</gene>
<evidence type="ECO:0000305" key="1"/>
<sequence>MGYQLFEFENLKDCHKALTERFKEFFNTALKKHHQISIAFSGGRSPISLLQKLSVLNLKWHECLISLVDERIIDTSHDDSNTKLLHDYLLQNNALKASFIPLLPEKISSDTNALFNFANQHFKQPHLAILGMGTDGHTASLFPETSAFLNEEKENIVLTKPINAPYERLSMSVNALENCEKLFLSISGVEKRGVLEKALKENAPYSLPIARILHSQKVTTEVFYAKN</sequence>
<organism>
    <name type="scientific">Helicobacter pylori (strain ATCC 700392 / 26695)</name>
    <name type="common">Campylobacter pylori</name>
    <dbReference type="NCBI Taxonomy" id="85962"/>
    <lineage>
        <taxon>Bacteria</taxon>
        <taxon>Pseudomonadati</taxon>
        <taxon>Campylobacterota</taxon>
        <taxon>Epsilonproteobacteria</taxon>
        <taxon>Campylobacterales</taxon>
        <taxon>Helicobacteraceae</taxon>
        <taxon>Helicobacter</taxon>
    </lineage>
</organism>
<proteinExistence type="inferred from homology"/>
<accession>O25730</accession>
<feature type="chain" id="PRO_0000090095" description="6-phosphogluconolactonase">
    <location>
        <begin position="1"/>
        <end position="227"/>
    </location>
</feature>
<dbReference type="EC" id="3.1.1.31"/>
<dbReference type="EMBL" id="AE000511">
    <property type="protein sequence ID" value="AAD08145.1"/>
    <property type="molecule type" value="Genomic_DNA"/>
</dbReference>
<dbReference type="PIR" id="F64657">
    <property type="entry name" value="F64657"/>
</dbReference>
<dbReference type="RefSeq" id="NP_207893.1">
    <property type="nucleotide sequence ID" value="NC_000915.1"/>
</dbReference>
<dbReference type="RefSeq" id="WP_000542222.1">
    <property type="nucleotide sequence ID" value="NC_018939.1"/>
</dbReference>
<dbReference type="SMR" id="O25730"/>
<dbReference type="DIP" id="DIP-3651N"/>
<dbReference type="IntAct" id="O25730">
    <property type="interactions" value="3"/>
</dbReference>
<dbReference type="MINT" id="O25730"/>
<dbReference type="STRING" id="85962.HP_1102"/>
<dbReference type="PaxDb" id="85962-C694_05685"/>
<dbReference type="EnsemblBacteria" id="AAD08145">
    <property type="protein sequence ID" value="AAD08145"/>
    <property type="gene ID" value="HP_1102"/>
</dbReference>
<dbReference type="KEGG" id="heo:C694_05685"/>
<dbReference type="KEGG" id="hpy:HP_1102"/>
<dbReference type="PATRIC" id="fig|85962.47.peg.1182"/>
<dbReference type="eggNOG" id="COG0363">
    <property type="taxonomic scope" value="Bacteria"/>
</dbReference>
<dbReference type="InParanoid" id="O25730"/>
<dbReference type="OrthoDB" id="9810967at2"/>
<dbReference type="PhylomeDB" id="O25730"/>
<dbReference type="UniPathway" id="UPA00115">
    <property type="reaction ID" value="UER00409"/>
</dbReference>
<dbReference type="Proteomes" id="UP000000429">
    <property type="component" value="Chromosome"/>
</dbReference>
<dbReference type="GO" id="GO:0017057">
    <property type="term" value="F:6-phosphogluconolactonase activity"/>
    <property type="evidence" value="ECO:0007669"/>
    <property type="project" value="UniProtKB-EC"/>
</dbReference>
<dbReference type="GO" id="GO:0005975">
    <property type="term" value="P:carbohydrate metabolic process"/>
    <property type="evidence" value="ECO:0007669"/>
    <property type="project" value="InterPro"/>
</dbReference>
<dbReference type="GO" id="GO:0006098">
    <property type="term" value="P:pentose-phosphate shunt"/>
    <property type="evidence" value="ECO:0007669"/>
    <property type="project" value="UniProtKB-UniPathway"/>
</dbReference>
<dbReference type="CDD" id="cd01400">
    <property type="entry name" value="6PGL"/>
    <property type="match status" value="1"/>
</dbReference>
<dbReference type="FunFam" id="3.40.50.1360:FF:000033">
    <property type="entry name" value="6-phosphogluconolactonase"/>
    <property type="match status" value="1"/>
</dbReference>
<dbReference type="Gene3D" id="3.40.50.1360">
    <property type="match status" value="1"/>
</dbReference>
<dbReference type="InterPro" id="IPR005900">
    <property type="entry name" value="6-phosphogluconolactonase_DevB"/>
</dbReference>
<dbReference type="InterPro" id="IPR006148">
    <property type="entry name" value="Glc/Gal-6P_isomerase"/>
</dbReference>
<dbReference type="InterPro" id="IPR037171">
    <property type="entry name" value="NagB/RpiA_transferase-like"/>
</dbReference>
<dbReference type="InterPro" id="IPR039104">
    <property type="entry name" value="PGLS"/>
</dbReference>
<dbReference type="NCBIfam" id="TIGR01198">
    <property type="entry name" value="pgl"/>
    <property type="match status" value="1"/>
</dbReference>
<dbReference type="PANTHER" id="PTHR11054">
    <property type="entry name" value="6-PHOSPHOGLUCONOLACTONASE"/>
    <property type="match status" value="1"/>
</dbReference>
<dbReference type="PANTHER" id="PTHR11054:SF0">
    <property type="entry name" value="6-PHOSPHOGLUCONOLACTONASE"/>
    <property type="match status" value="1"/>
</dbReference>
<dbReference type="Pfam" id="PF01182">
    <property type="entry name" value="Glucosamine_iso"/>
    <property type="match status" value="1"/>
</dbReference>
<dbReference type="SUPFAM" id="SSF100950">
    <property type="entry name" value="NagB/RpiA/CoA transferase-like"/>
    <property type="match status" value="1"/>
</dbReference>